<reference key="1">
    <citation type="journal article" date="2011" name="Nat. Biotechnol.">
        <title>Comparative genomic analysis of the thermophilic biomass-degrading fungi Myceliophthora thermophila and Thielavia terrestris.</title>
        <authorList>
            <person name="Berka R.M."/>
            <person name="Grigoriev I.V."/>
            <person name="Otillar R."/>
            <person name="Salamov A."/>
            <person name="Grimwood J."/>
            <person name="Reid I."/>
            <person name="Ishmael N."/>
            <person name="John T."/>
            <person name="Darmond C."/>
            <person name="Moisan M.-C."/>
            <person name="Henrissat B."/>
            <person name="Coutinho P.M."/>
            <person name="Lombard V."/>
            <person name="Natvig D.O."/>
            <person name="Lindquist E."/>
            <person name="Schmutz J."/>
            <person name="Lucas S."/>
            <person name="Harris P."/>
            <person name="Powlowski J."/>
            <person name="Bellemare A."/>
            <person name="Taylor D."/>
            <person name="Butler G."/>
            <person name="de Vries R.P."/>
            <person name="Allijn I.E."/>
            <person name="van den Brink J."/>
            <person name="Ushinsky S."/>
            <person name="Storms R."/>
            <person name="Powell A.J."/>
            <person name="Paulsen I.T."/>
            <person name="Elbourne L.D.H."/>
            <person name="Baker S.E."/>
            <person name="Magnuson J."/>
            <person name="LaBoissiere S."/>
            <person name="Clutterbuck A.J."/>
            <person name="Martinez D."/>
            <person name="Wogulis M."/>
            <person name="de Leon A.L."/>
            <person name="Rey M.W."/>
            <person name="Tsang A."/>
        </authorList>
    </citation>
    <scope>NUCLEOTIDE SEQUENCE [LARGE SCALE GENOMIC DNA]</scope>
    <source>
        <strain>ATCC 42464 / BCRC 31852 / DSM 1799</strain>
    </source>
</reference>
<reference key="2">
    <citation type="journal article" date="2016" name="Biotechnol. Biofuels">
        <title>Lytic polysaccharide monooxygenases from Myceliophthora thermophila C1 differ in substrate preference and reducing agent specificity.</title>
        <authorList>
            <person name="Frommhagen M."/>
            <person name="Koetsier M.J."/>
            <person name="Westphal A.H."/>
            <person name="Visser J."/>
            <person name="Hinz S.W."/>
            <person name="Vincken J.P."/>
            <person name="van Berkel W.J."/>
            <person name="Kabel M.A."/>
            <person name="Gruppen H."/>
        </authorList>
    </citation>
    <scope>FUNCTION</scope>
    <scope>CATALYTIC ACTIVITY</scope>
    <scope>ACTIVITY REGULATION</scope>
</reference>
<sequence length="237" mass="24857">MKVLAPLILAGAASAHTIFSSLEVGGVNQGIGQGVRVPSYNGPIEDVTSNSIACNGPPNPTTPTNKVITVRAGETVTAVWRYMLSTTGSAPNDIMDSSHKGPTMAYLKKVDNATTDSGVGGGWFKIQEDGLTNGVWGTERVINGQGRHNIKIPECIAPGQYLLRAEMLALHGASNYPGAQFYMECAQLNIVGGTGSKTPSTVSFPGAYKGTDPGVKINIYWPPVTSYQIPGPGVFTC</sequence>
<name>LP9C_THET4</name>
<evidence type="ECO:0000250" key="1">
    <source>
        <dbReference type="UniProtKB" id="Q1K8B6"/>
    </source>
</evidence>
<evidence type="ECO:0000250" key="2">
    <source>
        <dbReference type="UniProtKB" id="Q4WP32"/>
    </source>
</evidence>
<evidence type="ECO:0000255" key="3"/>
<evidence type="ECO:0000255" key="4">
    <source>
        <dbReference type="PROSITE-ProRule" id="PRU00498"/>
    </source>
</evidence>
<evidence type="ECO:0000269" key="5">
    <source>
    </source>
</evidence>
<evidence type="ECO:0000303" key="6">
    <source>
    </source>
</evidence>
<evidence type="ECO:0000305" key="7"/>
<evidence type="ECO:0000305" key="8">
    <source>
    </source>
</evidence>
<feature type="signal peptide" evidence="3">
    <location>
        <begin position="1"/>
        <end position="15"/>
    </location>
</feature>
<feature type="chain" id="PRO_5012903879" description="AA9 family lytic polysaccharide monooxygenase C" evidence="3">
    <location>
        <begin position="16"/>
        <end position="237"/>
    </location>
</feature>
<feature type="binding site" evidence="1">
    <location>
        <position position="16"/>
    </location>
    <ligand>
        <name>Cu(2+)</name>
        <dbReference type="ChEBI" id="CHEBI:29036"/>
        <note>catalytic</note>
    </ligand>
</feature>
<feature type="binding site" evidence="1">
    <location>
        <position position="99"/>
    </location>
    <ligand>
        <name>Cu(2+)</name>
        <dbReference type="ChEBI" id="CHEBI:29036"/>
        <note>catalytic</note>
    </ligand>
</feature>
<feature type="binding site" evidence="1">
    <location>
        <position position="171"/>
    </location>
    <ligand>
        <name>O2</name>
        <dbReference type="ChEBI" id="CHEBI:15379"/>
    </ligand>
</feature>
<feature type="binding site" evidence="1">
    <location>
        <position position="180"/>
    </location>
    <ligand>
        <name>O2</name>
        <dbReference type="ChEBI" id="CHEBI:15379"/>
    </ligand>
</feature>
<feature type="binding site" evidence="1">
    <location>
        <position position="182"/>
    </location>
    <ligand>
        <name>Cu(2+)</name>
        <dbReference type="ChEBI" id="CHEBI:29036"/>
        <note>catalytic</note>
    </ligand>
</feature>
<feature type="glycosylation site" description="N-linked (GlcNAc...) asparagine" evidence="4">
    <location>
        <position position="112"/>
    </location>
</feature>
<feature type="disulfide bond" evidence="2">
    <location>
        <begin position="54"/>
        <end position="185"/>
    </location>
</feature>
<feature type="disulfide bond" evidence="2">
    <location>
        <begin position="155"/>
        <end position="237"/>
    </location>
</feature>
<keyword id="KW-0119">Carbohydrate metabolism</keyword>
<keyword id="KW-0136">Cellulose degradation</keyword>
<keyword id="KW-0186">Copper</keyword>
<keyword id="KW-1015">Disulfide bond</keyword>
<keyword id="KW-0325">Glycoprotein</keyword>
<keyword id="KW-0479">Metal-binding</keyword>
<keyword id="KW-0503">Monooxygenase</keyword>
<keyword id="KW-0560">Oxidoreductase</keyword>
<keyword id="KW-0624">Polysaccharide degradation</keyword>
<keyword id="KW-1185">Reference proteome</keyword>
<keyword id="KW-0964">Secreted</keyword>
<keyword id="KW-0732">Signal</keyword>
<accession>G2QA92</accession>
<protein>
    <recommendedName>
        <fullName evidence="6">AA9 family lytic polysaccharide monooxygenase C</fullName>
        <shortName evidence="6">LPMO9C</shortName>
        <ecNumber evidence="5">1.14.99.56</ecNumber>
    </recommendedName>
    <alternativeName>
        <fullName evidence="7">Cellulase LPMO9C</fullName>
    </alternativeName>
    <alternativeName>
        <fullName evidence="7">Endo-beta-1,4-glucanase LPMO9C</fullName>
        <shortName evidence="7">Endoglucanase LPMO9C</shortName>
    </alternativeName>
    <alternativeName>
        <fullName evidence="7">Glycosyl hydrolase 61 family protein LPMO9C</fullName>
    </alternativeName>
</protein>
<comment type="function">
    <text evidence="5">Lytic polysaccharide monooxygenase (LPMO) that depolymerizes crystalline and amorphous polysaccharides via the oxidation of scissile alpha- or beta-(1-4)-glycosidic bonds, yielding C4 oxidation products (PubMed:27588039). Catalysis by LPMOs requires the reduction of the active-site copper from Cu(II) to Cu(I) by a reducing agent and H(2)O(2) or O(2) as a cosubstrate (PubMed:27588039). Shows oxidative cleavage of beta-(1-3, 1-4)-glucan from oat spelt or xyloglucan from tamarind seed, in addition to cellulose (PubMed:27588039).</text>
</comment>
<comment type="catalytic activity">
    <reaction evidence="5">
        <text>[(1-&gt;4)-beta-D-glucosyl]n+m + reduced acceptor + O2 = 4-dehydro-beta-D-glucosyl-[(1-&gt;4)-beta-D-glucosyl]n-1 + [(1-&gt;4)-beta-D-glucosyl]m + acceptor + H2O.</text>
        <dbReference type="EC" id="1.14.99.56"/>
    </reaction>
</comment>
<comment type="cofactor">
    <cofactor evidence="8">
        <name>Cu(2+)</name>
        <dbReference type="ChEBI" id="CHEBI:29036"/>
    </cofactor>
    <text evidence="8">Binds 1 copper ion per subunit.</text>
</comment>
<comment type="activity regulation">
    <text evidence="5">Is able to utilize various natural phenolic compounds as reducing agents. Most of these reducing agents are present in plants, either free or as lignin building blocks, such as sinapic acid, or as flavonoids such as catechin and dopamine (PubMed:27588039). Phenolic compounds with 1,2-benzenediol and 1,2,3-benzenetriol moieties yield the highest release of oxidized and non-oxidized glucooligosaccharides from cellulose compared to monophenols or sulfur-containing compounds (PubMed:27588039).</text>
</comment>
<comment type="subcellular location">
    <subcellularLocation>
        <location evidence="8">Secreted</location>
    </subcellularLocation>
</comment>
<comment type="biotechnology">
    <text evidence="5">Lignocellulose is the most abundant polymeric composite on Earth and is a recalcitrant but promising renewable substrate for industrial biotechnology applications. Together with cellobiose dehydrogenases (CDHs) an enzymatic system capable of oxidative cellulose cleavage is formed, which increases the efficiency of cellulases and put LPMOs at focus of biofuel research.</text>
</comment>
<comment type="similarity">
    <text evidence="7">Belongs to the polysaccharide monooxygenase AA9 family.</text>
</comment>
<proteinExistence type="evidence at protein level"/>
<organism>
    <name type="scientific">Thermothelomyces thermophilus (strain ATCC 42464 / BCRC 31852 / DSM 1799)</name>
    <name type="common">Sporotrichum thermophile</name>
    <dbReference type="NCBI Taxonomy" id="573729"/>
    <lineage>
        <taxon>Eukaryota</taxon>
        <taxon>Fungi</taxon>
        <taxon>Dikarya</taxon>
        <taxon>Ascomycota</taxon>
        <taxon>Pezizomycotina</taxon>
        <taxon>Sordariomycetes</taxon>
        <taxon>Sordariomycetidae</taxon>
        <taxon>Sordariales</taxon>
        <taxon>Chaetomiaceae</taxon>
        <taxon>Thermothelomyces</taxon>
    </lineage>
</organism>
<gene>
    <name evidence="6" type="primary">LPMO9C</name>
    <name type="ORF">MYCTH_100518</name>
</gene>
<dbReference type="EC" id="1.14.99.56" evidence="5"/>
<dbReference type="EMBL" id="CP003003">
    <property type="protein sequence ID" value="AEO56642.1"/>
    <property type="molecule type" value="Genomic_DNA"/>
</dbReference>
<dbReference type="RefSeq" id="XP_003661887.1">
    <property type="nucleotide sequence ID" value="XM_003661839.1"/>
</dbReference>
<dbReference type="SMR" id="G2QA92"/>
<dbReference type="STRING" id="573729.G2QA92"/>
<dbReference type="GeneID" id="11510692"/>
<dbReference type="KEGG" id="mtm:MYCTH_100518"/>
<dbReference type="VEuPathDB" id="FungiDB:MYCTH_100518"/>
<dbReference type="eggNOG" id="ENOG502SJGH">
    <property type="taxonomic scope" value="Eukaryota"/>
</dbReference>
<dbReference type="HOGENOM" id="CLU_031730_0_3_1"/>
<dbReference type="InParanoid" id="G2QA92"/>
<dbReference type="OMA" id="TAIWRYM"/>
<dbReference type="OrthoDB" id="5558646at2759"/>
<dbReference type="Proteomes" id="UP000007322">
    <property type="component" value="Chromosome 2"/>
</dbReference>
<dbReference type="GO" id="GO:0005576">
    <property type="term" value="C:extracellular region"/>
    <property type="evidence" value="ECO:0007669"/>
    <property type="project" value="UniProtKB-SubCell"/>
</dbReference>
<dbReference type="GO" id="GO:0046872">
    <property type="term" value="F:metal ion binding"/>
    <property type="evidence" value="ECO:0007669"/>
    <property type="project" value="UniProtKB-KW"/>
</dbReference>
<dbReference type="GO" id="GO:0004497">
    <property type="term" value="F:monooxygenase activity"/>
    <property type="evidence" value="ECO:0007669"/>
    <property type="project" value="UniProtKB-KW"/>
</dbReference>
<dbReference type="GO" id="GO:0030245">
    <property type="term" value="P:cellulose catabolic process"/>
    <property type="evidence" value="ECO:0007669"/>
    <property type="project" value="UniProtKB-KW"/>
</dbReference>
<dbReference type="CDD" id="cd21175">
    <property type="entry name" value="LPMO_AA9"/>
    <property type="match status" value="1"/>
</dbReference>
<dbReference type="Gene3D" id="2.70.50.70">
    <property type="match status" value="1"/>
</dbReference>
<dbReference type="InterPro" id="IPR049892">
    <property type="entry name" value="AA9"/>
</dbReference>
<dbReference type="InterPro" id="IPR005103">
    <property type="entry name" value="AA9_LPMO"/>
</dbReference>
<dbReference type="PANTHER" id="PTHR33353:SF18">
    <property type="entry name" value="ENDOGLUCANASE II"/>
    <property type="match status" value="1"/>
</dbReference>
<dbReference type="PANTHER" id="PTHR33353">
    <property type="entry name" value="PUTATIVE (AFU_ORTHOLOGUE AFUA_1G12560)-RELATED"/>
    <property type="match status" value="1"/>
</dbReference>
<dbReference type="Pfam" id="PF03443">
    <property type="entry name" value="AA9"/>
    <property type="match status" value="1"/>
</dbReference>